<sequence length="207" mass="22833">MYDYIRGVLTYISSSTMVIESQGLGFSIFAPERWLIELSSQLHRELIVYTYTVVRETEHVLYGFHTRGERECFRMLISFSGVGPKTGLAILNTFSLSQLCSIARAEDIKAIASVPGIGKKTAEKLMVDLKQKLADLLPLDAQILASWEPAKPSCMEEGIQALAALGYPKSSAERMIAEAMSELPDHASVAEILPIALKKNLQGLNKI</sequence>
<accession>Q5L6Z3</accession>
<protein>
    <recommendedName>
        <fullName evidence="1">Holliday junction branch migration complex subunit RuvA</fullName>
    </recommendedName>
</protein>
<dbReference type="EMBL" id="CR848038">
    <property type="protein sequence ID" value="CAH63577.1"/>
    <property type="status" value="ALT_INIT"/>
    <property type="molecule type" value="Genomic_DNA"/>
</dbReference>
<dbReference type="RefSeq" id="WP_011096840.1">
    <property type="nucleotide sequence ID" value="NC_004552.2"/>
</dbReference>
<dbReference type="SMR" id="Q5L6Z3"/>
<dbReference type="KEGG" id="cab:CAB119"/>
<dbReference type="eggNOG" id="COG0632">
    <property type="taxonomic scope" value="Bacteria"/>
</dbReference>
<dbReference type="HOGENOM" id="CLU_087936_3_0_0"/>
<dbReference type="OrthoDB" id="5293449at2"/>
<dbReference type="Proteomes" id="UP000001012">
    <property type="component" value="Chromosome"/>
</dbReference>
<dbReference type="GO" id="GO:0005737">
    <property type="term" value="C:cytoplasm"/>
    <property type="evidence" value="ECO:0007669"/>
    <property type="project" value="UniProtKB-SubCell"/>
</dbReference>
<dbReference type="GO" id="GO:0009379">
    <property type="term" value="C:Holliday junction helicase complex"/>
    <property type="evidence" value="ECO:0007669"/>
    <property type="project" value="InterPro"/>
</dbReference>
<dbReference type="GO" id="GO:0048476">
    <property type="term" value="C:Holliday junction resolvase complex"/>
    <property type="evidence" value="ECO:0007669"/>
    <property type="project" value="UniProtKB-UniRule"/>
</dbReference>
<dbReference type="GO" id="GO:0005524">
    <property type="term" value="F:ATP binding"/>
    <property type="evidence" value="ECO:0007669"/>
    <property type="project" value="InterPro"/>
</dbReference>
<dbReference type="GO" id="GO:0000400">
    <property type="term" value="F:four-way junction DNA binding"/>
    <property type="evidence" value="ECO:0007669"/>
    <property type="project" value="UniProtKB-UniRule"/>
</dbReference>
<dbReference type="GO" id="GO:0009378">
    <property type="term" value="F:four-way junction helicase activity"/>
    <property type="evidence" value="ECO:0007669"/>
    <property type="project" value="InterPro"/>
</dbReference>
<dbReference type="GO" id="GO:0006310">
    <property type="term" value="P:DNA recombination"/>
    <property type="evidence" value="ECO:0007669"/>
    <property type="project" value="UniProtKB-UniRule"/>
</dbReference>
<dbReference type="GO" id="GO:0006281">
    <property type="term" value="P:DNA repair"/>
    <property type="evidence" value="ECO:0007669"/>
    <property type="project" value="UniProtKB-UniRule"/>
</dbReference>
<dbReference type="CDD" id="cd14332">
    <property type="entry name" value="UBA_RuvA_C"/>
    <property type="match status" value="1"/>
</dbReference>
<dbReference type="Gene3D" id="1.10.150.20">
    <property type="entry name" value="5' to 3' exonuclease, C-terminal subdomain"/>
    <property type="match status" value="1"/>
</dbReference>
<dbReference type="Gene3D" id="1.10.8.10">
    <property type="entry name" value="DNA helicase RuvA subunit, C-terminal domain"/>
    <property type="match status" value="1"/>
</dbReference>
<dbReference type="Gene3D" id="2.40.50.140">
    <property type="entry name" value="Nucleic acid-binding proteins"/>
    <property type="match status" value="1"/>
</dbReference>
<dbReference type="HAMAP" id="MF_00031">
    <property type="entry name" value="DNA_HJ_migration_RuvA"/>
    <property type="match status" value="1"/>
</dbReference>
<dbReference type="InterPro" id="IPR013849">
    <property type="entry name" value="DNA_helicase_Holl-junc_RuvA_I"/>
</dbReference>
<dbReference type="InterPro" id="IPR003583">
    <property type="entry name" value="Hlx-hairpin-Hlx_DNA-bd_motif"/>
</dbReference>
<dbReference type="InterPro" id="IPR012340">
    <property type="entry name" value="NA-bd_OB-fold"/>
</dbReference>
<dbReference type="InterPro" id="IPR000085">
    <property type="entry name" value="RuvA"/>
</dbReference>
<dbReference type="InterPro" id="IPR010994">
    <property type="entry name" value="RuvA_2-like"/>
</dbReference>
<dbReference type="InterPro" id="IPR011114">
    <property type="entry name" value="RuvA_C"/>
</dbReference>
<dbReference type="InterPro" id="IPR036267">
    <property type="entry name" value="RuvA_C_sf"/>
</dbReference>
<dbReference type="NCBIfam" id="TIGR00084">
    <property type="entry name" value="ruvA"/>
    <property type="match status" value="1"/>
</dbReference>
<dbReference type="Pfam" id="PF14520">
    <property type="entry name" value="HHH_5"/>
    <property type="match status" value="1"/>
</dbReference>
<dbReference type="Pfam" id="PF01330">
    <property type="entry name" value="RuvA_N"/>
    <property type="match status" value="1"/>
</dbReference>
<dbReference type="SMART" id="SM00278">
    <property type="entry name" value="HhH1"/>
    <property type="match status" value="2"/>
</dbReference>
<dbReference type="SUPFAM" id="SSF46929">
    <property type="entry name" value="DNA helicase RuvA subunit, C-terminal domain"/>
    <property type="match status" value="1"/>
</dbReference>
<dbReference type="SUPFAM" id="SSF50249">
    <property type="entry name" value="Nucleic acid-binding proteins"/>
    <property type="match status" value="1"/>
</dbReference>
<dbReference type="SUPFAM" id="SSF47781">
    <property type="entry name" value="RuvA domain 2-like"/>
    <property type="match status" value="1"/>
</dbReference>
<proteinExistence type="inferred from homology"/>
<evidence type="ECO:0000255" key="1">
    <source>
        <dbReference type="HAMAP-Rule" id="MF_00031"/>
    </source>
</evidence>
<evidence type="ECO:0000305" key="2"/>
<reference key="1">
    <citation type="journal article" date="2005" name="Genome Res.">
        <title>The Chlamydophila abortus genome sequence reveals an array of variable proteins that contribute to interspecies variation.</title>
        <authorList>
            <person name="Thomson N.R."/>
            <person name="Yeats C."/>
            <person name="Bell K."/>
            <person name="Holden M.T.G."/>
            <person name="Bentley S.D."/>
            <person name="Livingstone M."/>
            <person name="Cerdeno-Tarraga A.-M."/>
            <person name="Harris B."/>
            <person name="Doggett J."/>
            <person name="Ormond D."/>
            <person name="Mungall K."/>
            <person name="Clarke K."/>
            <person name="Feltwell T."/>
            <person name="Hance Z."/>
            <person name="Sanders M."/>
            <person name="Quail M.A."/>
            <person name="Price C."/>
            <person name="Barrell B.G."/>
            <person name="Parkhill J."/>
            <person name="Longbottom D."/>
        </authorList>
    </citation>
    <scope>NUCLEOTIDE SEQUENCE [LARGE SCALE GENOMIC DNA]</scope>
    <source>
        <strain>DSM 27085 / S26/3</strain>
    </source>
</reference>
<feature type="chain" id="PRO_0000224855" description="Holliday junction branch migration complex subunit RuvA">
    <location>
        <begin position="1"/>
        <end position="207"/>
    </location>
</feature>
<feature type="region of interest" description="Domain I" evidence="1">
    <location>
        <begin position="1"/>
        <end position="65"/>
    </location>
</feature>
<feature type="region of interest" description="Domain II" evidence="1">
    <location>
        <begin position="66"/>
        <end position="144"/>
    </location>
</feature>
<feature type="region of interest" description="Flexible linker" evidence="1">
    <location>
        <begin position="145"/>
        <end position="155"/>
    </location>
</feature>
<feature type="region of interest" description="Domain III" evidence="1">
    <location>
        <begin position="155"/>
        <end position="207"/>
    </location>
</feature>
<name>RUVA_CHLAB</name>
<organism>
    <name type="scientific">Chlamydia abortus (strain DSM 27085 / S26/3)</name>
    <name type="common">Chlamydophila abortus</name>
    <dbReference type="NCBI Taxonomy" id="218497"/>
    <lineage>
        <taxon>Bacteria</taxon>
        <taxon>Pseudomonadati</taxon>
        <taxon>Chlamydiota</taxon>
        <taxon>Chlamydiia</taxon>
        <taxon>Chlamydiales</taxon>
        <taxon>Chlamydiaceae</taxon>
        <taxon>Chlamydia/Chlamydophila group</taxon>
        <taxon>Chlamydia</taxon>
    </lineage>
</organism>
<keyword id="KW-0963">Cytoplasm</keyword>
<keyword id="KW-0227">DNA damage</keyword>
<keyword id="KW-0233">DNA recombination</keyword>
<keyword id="KW-0234">DNA repair</keyword>
<keyword id="KW-0238">DNA-binding</keyword>
<comment type="function">
    <text evidence="1">The RuvA-RuvB-RuvC complex processes Holliday junction (HJ) DNA during genetic recombination and DNA repair, while the RuvA-RuvB complex plays an important role in the rescue of blocked DNA replication forks via replication fork reversal (RFR). RuvA specifically binds to HJ cruciform DNA, conferring on it an open structure. The RuvB hexamer acts as an ATP-dependent pump, pulling dsDNA into and through the RuvAB complex. HJ branch migration allows RuvC to scan DNA until it finds its consensus sequence, where it cleaves and resolves the cruciform DNA.</text>
</comment>
<comment type="subunit">
    <text evidence="1">Homotetramer. Forms an RuvA(8)-RuvB(12)-Holliday junction (HJ) complex. HJ DNA is sandwiched between 2 RuvA tetramers; dsDNA enters through RuvA and exits via RuvB. An RuvB hexamer assembles on each DNA strand where it exits the tetramer. Each RuvB hexamer is contacted by two RuvA subunits (via domain III) on 2 adjacent RuvB subunits; this complex drives branch migration. In the full resolvosome a probable DNA-RuvA(4)-RuvB(12)-RuvC(2) complex forms which resolves the HJ.</text>
</comment>
<comment type="subcellular location">
    <subcellularLocation>
        <location evidence="1">Cytoplasm</location>
    </subcellularLocation>
</comment>
<comment type="domain">
    <text evidence="1">Has three domains with a flexible linker between the domains II and III and assumes an 'L' shape. Domain III is highly mobile and contacts RuvB.</text>
</comment>
<comment type="similarity">
    <text evidence="1">Belongs to the RuvA family.</text>
</comment>
<comment type="sequence caution" evidence="2">
    <conflict type="erroneous initiation">
        <sequence resource="EMBL-CDS" id="CAH63577"/>
    </conflict>
    <text>Extended N-terminus.</text>
</comment>
<gene>
    <name evidence="1" type="primary">ruvA</name>
    <name type="ordered locus">CAB119</name>
</gene>